<keyword id="KW-0067">ATP-binding</keyword>
<keyword id="KW-1003">Cell membrane</keyword>
<keyword id="KW-0406">Ion transport</keyword>
<keyword id="KW-0472">Membrane</keyword>
<keyword id="KW-0547">Nucleotide-binding</keyword>
<keyword id="KW-0630">Potassium</keyword>
<keyword id="KW-0633">Potassium transport</keyword>
<keyword id="KW-0812">Transmembrane</keyword>
<keyword id="KW-1133">Transmembrane helix</keyword>
<keyword id="KW-0813">Transport</keyword>
<comment type="function">
    <text evidence="1">Part of the high-affinity ATP-driven potassium transport (or Kdp) system, which catalyzes the hydrolysis of ATP coupled with the electrogenic transport of potassium into the cytoplasm. This subunit acts as a catalytic chaperone that increases the ATP-binding affinity of the ATP-hydrolyzing subunit KdpB by the formation of a transient KdpB/KdpC/ATP ternary complex.</text>
</comment>
<comment type="subunit">
    <text evidence="1">The system is composed of three essential subunits: KdpA, KdpB and KdpC.</text>
</comment>
<comment type="subcellular location">
    <subcellularLocation>
        <location evidence="1">Cell membrane</location>
        <topology evidence="1">Single-pass membrane protein</topology>
    </subcellularLocation>
</comment>
<comment type="similarity">
    <text evidence="1">Belongs to the KdpC family.</text>
</comment>
<feature type="chain" id="PRO_0000197016" description="Potassium-transporting ATPase KdpC subunit">
    <location>
        <begin position="1"/>
        <end position="186"/>
    </location>
</feature>
<feature type="transmembrane region" description="Helical" evidence="1">
    <location>
        <begin position="10"/>
        <end position="30"/>
    </location>
</feature>
<organism>
    <name type="scientific">Staphylococcus aureus (strain N315)</name>
    <dbReference type="NCBI Taxonomy" id="158879"/>
    <lineage>
        <taxon>Bacteria</taxon>
        <taxon>Bacillati</taxon>
        <taxon>Bacillota</taxon>
        <taxon>Bacilli</taxon>
        <taxon>Bacillales</taxon>
        <taxon>Staphylococcaceae</taxon>
        <taxon>Staphylococcus</taxon>
    </lineage>
</organism>
<sequence length="186" mass="20618">MNTIRNSICLTIITMVLCGFLFPLAITLIGQIFFYQQANGSLITYDNRIVGSKLIGQHWTETRYFHGRPSAVDYNMNPEKLYKNGVSSGGSNESNGNTELIARMKHHVKFGNSNVTIDAATSSGSGLDPHITVENALKQAPRIADARHVSTSRVADLIQHRKQRGVLTNDYVNVLELNIALDKMKD</sequence>
<gene>
    <name evidence="1" type="primary">kdpC</name>
    <name type="synonym">kdpC1</name>
    <name type="ordered locus">SA1879</name>
</gene>
<proteinExistence type="inferred from homology"/>
<protein>
    <recommendedName>
        <fullName evidence="1">Potassium-transporting ATPase KdpC subunit</fullName>
    </recommendedName>
    <alternativeName>
        <fullName evidence="1">ATP phosphohydrolase [potassium-transporting] C chain</fullName>
    </alternativeName>
    <alternativeName>
        <fullName evidence="1">Potassium-binding and translocating subunit C</fullName>
    </alternativeName>
    <alternativeName>
        <fullName evidence="1">Potassium-translocating ATPase C chain</fullName>
    </alternativeName>
</protein>
<accession>P65214</accession>
<accession>Q99SI1</accession>
<reference key="1">
    <citation type="journal article" date="2001" name="Lancet">
        <title>Whole genome sequencing of meticillin-resistant Staphylococcus aureus.</title>
        <authorList>
            <person name="Kuroda M."/>
            <person name="Ohta T."/>
            <person name="Uchiyama I."/>
            <person name="Baba T."/>
            <person name="Yuzawa H."/>
            <person name="Kobayashi I."/>
            <person name="Cui L."/>
            <person name="Oguchi A."/>
            <person name="Aoki K."/>
            <person name="Nagai Y."/>
            <person name="Lian J.-Q."/>
            <person name="Ito T."/>
            <person name="Kanamori M."/>
            <person name="Matsumaru H."/>
            <person name="Maruyama A."/>
            <person name="Murakami H."/>
            <person name="Hosoyama A."/>
            <person name="Mizutani-Ui Y."/>
            <person name="Takahashi N.K."/>
            <person name="Sawano T."/>
            <person name="Inoue R."/>
            <person name="Kaito C."/>
            <person name="Sekimizu K."/>
            <person name="Hirakawa H."/>
            <person name="Kuhara S."/>
            <person name="Goto S."/>
            <person name="Yabuzaki J."/>
            <person name="Kanehisa M."/>
            <person name="Yamashita A."/>
            <person name="Oshima K."/>
            <person name="Furuya K."/>
            <person name="Yoshino C."/>
            <person name="Shiba T."/>
            <person name="Hattori M."/>
            <person name="Ogasawara N."/>
            <person name="Hayashi H."/>
            <person name="Hiramatsu K."/>
        </authorList>
    </citation>
    <scope>NUCLEOTIDE SEQUENCE [LARGE SCALE GENOMIC DNA]</scope>
    <source>
        <strain>N315</strain>
    </source>
</reference>
<dbReference type="EMBL" id="BA000018">
    <property type="protein sequence ID" value="BAB43162.1"/>
    <property type="molecule type" value="Genomic_DNA"/>
</dbReference>
<dbReference type="PIR" id="A90000">
    <property type="entry name" value="A90000"/>
</dbReference>
<dbReference type="RefSeq" id="WP_001092411.1">
    <property type="nucleotide sequence ID" value="NC_002745.2"/>
</dbReference>
<dbReference type="SMR" id="P65214"/>
<dbReference type="EnsemblBacteria" id="BAB43162">
    <property type="protein sequence ID" value="BAB43162"/>
    <property type="gene ID" value="BAB43162"/>
</dbReference>
<dbReference type="KEGG" id="sau:SA1879"/>
<dbReference type="HOGENOM" id="CLU_077094_2_0_9"/>
<dbReference type="GO" id="GO:0005886">
    <property type="term" value="C:plasma membrane"/>
    <property type="evidence" value="ECO:0007669"/>
    <property type="project" value="UniProtKB-SubCell"/>
</dbReference>
<dbReference type="GO" id="GO:0005524">
    <property type="term" value="F:ATP binding"/>
    <property type="evidence" value="ECO:0007669"/>
    <property type="project" value="UniProtKB-UniRule"/>
</dbReference>
<dbReference type="GO" id="GO:0008556">
    <property type="term" value="F:P-type potassium transmembrane transporter activity"/>
    <property type="evidence" value="ECO:0007669"/>
    <property type="project" value="InterPro"/>
</dbReference>
<dbReference type="HAMAP" id="MF_00276">
    <property type="entry name" value="KdpC"/>
    <property type="match status" value="1"/>
</dbReference>
<dbReference type="InterPro" id="IPR003820">
    <property type="entry name" value="KdpC"/>
</dbReference>
<dbReference type="NCBIfam" id="TIGR00681">
    <property type="entry name" value="kdpC"/>
    <property type="match status" value="1"/>
</dbReference>
<dbReference type="NCBIfam" id="NF010602">
    <property type="entry name" value="PRK13998.1"/>
    <property type="match status" value="1"/>
</dbReference>
<dbReference type="PANTHER" id="PTHR30042">
    <property type="entry name" value="POTASSIUM-TRANSPORTING ATPASE C CHAIN"/>
    <property type="match status" value="1"/>
</dbReference>
<dbReference type="PANTHER" id="PTHR30042:SF2">
    <property type="entry name" value="POTASSIUM-TRANSPORTING ATPASE KDPC SUBUNIT"/>
    <property type="match status" value="1"/>
</dbReference>
<dbReference type="Pfam" id="PF02669">
    <property type="entry name" value="KdpC"/>
    <property type="match status" value="1"/>
</dbReference>
<dbReference type="PIRSF" id="PIRSF001296">
    <property type="entry name" value="K_ATPase_KdpC"/>
    <property type="match status" value="1"/>
</dbReference>
<name>KDPC_STAAN</name>
<evidence type="ECO:0000255" key="1">
    <source>
        <dbReference type="HAMAP-Rule" id="MF_00276"/>
    </source>
</evidence>